<proteinExistence type="inferred from homology"/>
<reference key="1">
    <citation type="journal article" date="2001" name="Nucleic Acids Res.">
        <title>The complete genome sequence of the murine respiratory pathogen Mycoplasma pulmonis.</title>
        <authorList>
            <person name="Chambaud I."/>
            <person name="Heilig R."/>
            <person name="Ferris S."/>
            <person name="Barbe V."/>
            <person name="Samson D."/>
            <person name="Galisson F."/>
            <person name="Moszer I."/>
            <person name="Dybvig K."/>
            <person name="Wroblewski H."/>
            <person name="Viari A."/>
            <person name="Rocha E.P.C."/>
            <person name="Blanchard A."/>
        </authorList>
    </citation>
    <scope>NUCLEOTIDE SEQUENCE [LARGE SCALE GENOMIC DNA]</scope>
    <source>
        <strain>UAB CTIP</strain>
    </source>
</reference>
<protein>
    <recommendedName>
        <fullName evidence="1">2,3-bisphosphoglycerate-independent phosphoglycerate mutase</fullName>
        <shortName evidence="1">BPG-independent PGAM</shortName>
        <shortName evidence="1">Phosphoglyceromutase</shortName>
        <shortName evidence="1">iPGM</shortName>
        <ecNumber evidence="1">5.4.2.12</ecNumber>
    </recommendedName>
</protein>
<accession>Q98QA7</accession>
<feature type="chain" id="PRO_0000212176" description="2,3-bisphosphoglycerate-independent phosphoglycerate mutase">
    <location>
        <begin position="1"/>
        <end position="505"/>
    </location>
</feature>
<feature type="active site" description="Phosphoserine intermediate" evidence="1">
    <location>
        <position position="65"/>
    </location>
</feature>
<feature type="binding site" evidence="1">
    <location>
        <position position="15"/>
    </location>
    <ligand>
        <name>Mn(2+)</name>
        <dbReference type="ChEBI" id="CHEBI:29035"/>
        <label>2</label>
    </ligand>
</feature>
<feature type="binding site" evidence="1">
    <location>
        <position position="65"/>
    </location>
    <ligand>
        <name>Mn(2+)</name>
        <dbReference type="ChEBI" id="CHEBI:29035"/>
        <label>2</label>
    </ligand>
</feature>
<feature type="binding site" evidence="1">
    <location>
        <position position="126"/>
    </location>
    <ligand>
        <name>substrate</name>
    </ligand>
</feature>
<feature type="binding site" evidence="1">
    <location>
        <begin position="156"/>
        <end position="157"/>
    </location>
    <ligand>
        <name>substrate</name>
    </ligand>
</feature>
<feature type="binding site" evidence="1">
    <location>
        <position position="187"/>
    </location>
    <ligand>
        <name>substrate</name>
    </ligand>
</feature>
<feature type="binding site" evidence="1">
    <location>
        <position position="193"/>
    </location>
    <ligand>
        <name>substrate</name>
    </ligand>
</feature>
<feature type="binding site" evidence="1">
    <location>
        <begin position="260"/>
        <end position="263"/>
    </location>
    <ligand>
        <name>substrate</name>
    </ligand>
</feature>
<feature type="binding site" evidence="1">
    <location>
        <position position="333"/>
    </location>
    <ligand>
        <name>substrate</name>
    </ligand>
</feature>
<feature type="binding site" evidence="1">
    <location>
        <position position="398"/>
    </location>
    <ligand>
        <name>Mn(2+)</name>
        <dbReference type="ChEBI" id="CHEBI:29035"/>
        <label>1</label>
    </ligand>
</feature>
<feature type="binding site" evidence="1">
    <location>
        <position position="402"/>
    </location>
    <ligand>
        <name>Mn(2+)</name>
        <dbReference type="ChEBI" id="CHEBI:29035"/>
        <label>1</label>
    </ligand>
</feature>
<feature type="binding site" evidence="1">
    <location>
        <position position="439"/>
    </location>
    <ligand>
        <name>Mn(2+)</name>
        <dbReference type="ChEBI" id="CHEBI:29035"/>
        <label>2</label>
    </ligand>
</feature>
<feature type="binding site" evidence="1">
    <location>
        <position position="440"/>
    </location>
    <ligand>
        <name>Mn(2+)</name>
        <dbReference type="ChEBI" id="CHEBI:29035"/>
        <label>2</label>
    </ligand>
</feature>
<feature type="binding site" evidence="1">
    <location>
        <position position="457"/>
    </location>
    <ligand>
        <name>Mn(2+)</name>
        <dbReference type="ChEBI" id="CHEBI:29035"/>
        <label>1</label>
    </ligand>
</feature>
<dbReference type="EC" id="5.4.2.12" evidence="1"/>
<dbReference type="EMBL" id="AL445564">
    <property type="protein sequence ID" value="CAC13632.1"/>
    <property type="molecule type" value="Genomic_DNA"/>
</dbReference>
<dbReference type="PIR" id="C90569">
    <property type="entry name" value="C90569"/>
</dbReference>
<dbReference type="RefSeq" id="WP_010925260.1">
    <property type="nucleotide sequence ID" value="NC_002771.1"/>
</dbReference>
<dbReference type="SMR" id="Q98QA7"/>
<dbReference type="STRING" id="272635.gene:17577060"/>
<dbReference type="KEGG" id="mpu:MYPU_4590"/>
<dbReference type="eggNOG" id="COG0696">
    <property type="taxonomic scope" value="Bacteria"/>
</dbReference>
<dbReference type="HOGENOM" id="CLU_026099_2_0_14"/>
<dbReference type="BioCyc" id="MPUL272635:G1GT6-463-MONOMER"/>
<dbReference type="UniPathway" id="UPA00109">
    <property type="reaction ID" value="UER00186"/>
</dbReference>
<dbReference type="Proteomes" id="UP000000528">
    <property type="component" value="Chromosome"/>
</dbReference>
<dbReference type="GO" id="GO:0005829">
    <property type="term" value="C:cytosol"/>
    <property type="evidence" value="ECO:0007669"/>
    <property type="project" value="TreeGrafter"/>
</dbReference>
<dbReference type="GO" id="GO:0030145">
    <property type="term" value="F:manganese ion binding"/>
    <property type="evidence" value="ECO:0007669"/>
    <property type="project" value="UniProtKB-UniRule"/>
</dbReference>
<dbReference type="GO" id="GO:0004619">
    <property type="term" value="F:phosphoglycerate mutase activity"/>
    <property type="evidence" value="ECO:0007669"/>
    <property type="project" value="UniProtKB-EC"/>
</dbReference>
<dbReference type="GO" id="GO:0006007">
    <property type="term" value="P:glucose catabolic process"/>
    <property type="evidence" value="ECO:0007669"/>
    <property type="project" value="InterPro"/>
</dbReference>
<dbReference type="GO" id="GO:0006096">
    <property type="term" value="P:glycolytic process"/>
    <property type="evidence" value="ECO:0007669"/>
    <property type="project" value="UniProtKB-UniRule"/>
</dbReference>
<dbReference type="CDD" id="cd16010">
    <property type="entry name" value="iPGM"/>
    <property type="match status" value="1"/>
</dbReference>
<dbReference type="FunFam" id="3.40.1450.10:FF:000002">
    <property type="entry name" value="2,3-bisphosphoglycerate-independent phosphoglycerate mutase"/>
    <property type="match status" value="1"/>
</dbReference>
<dbReference type="Gene3D" id="3.40.720.10">
    <property type="entry name" value="Alkaline Phosphatase, subunit A"/>
    <property type="match status" value="1"/>
</dbReference>
<dbReference type="Gene3D" id="3.40.1450.10">
    <property type="entry name" value="BPG-independent phosphoglycerate mutase, domain B"/>
    <property type="match status" value="1"/>
</dbReference>
<dbReference type="HAMAP" id="MF_01038">
    <property type="entry name" value="GpmI"/>
    <property type="match status" value="1"/>
</dbReference>
<dbReference type="InterPro" id="IPR017850">
    <property type="entry name" value="Alkaline_phosphatase_core_sf"/>
</dbReference>
<dbReference type="InterPro" id="IPR011258">
    <property type="entry name" value="BPG-indep_PGM_N"/>
</dbReference>
<dbReference type="InterPro" id="IPR006124">
    <property type="entry name" value="Metalloenzyme"/>
</dbReference>
<dbReference type="InterPro" id="IPR036646">
    <property type="entry name" value="PGAM_B_sf"/>
</dbReference>
<dbReference type="InterPro" id="IPR005995">
    <property type="entry name" value="Pgm_bpd_ind"/>
</dbReference>
<dbReference type="NCBIfam" id="TIGR01307">
    <property type="entry name" value="pgm_bpd_ind"/>
    <property type="match status" value="1"/>
</dbReference>
<dbReference type="PANTHER" id="PTHR31637">
    <property type="entry name" value="2,3-BISPHOSPHOGLYCERATE-INDEPENDENT PHOSPHOGLYCERATE MUTASE"/>
    <property type="match status" value="1"/>
</dbReference>
<dbReference type="PANTHER" id="PTHR31637:SF0">
    <property type="entry name" value="2,3-BISPHOSPHOGLYCERATE-INDEPENDENT PHOSPHOGLYCERATE MUTASE"/>
    <property type="match status" value="1"/>
</dbReference>
<dbReference type="Pfam" id="PF06415">
    <property type="entry name" value="iPGM_N"/>
    <property type="match status" value="1"/>
</dbReference>
<dbReference type="Pfam" id="PF01676">
    <property type="entry name" value="Metalloenzyme"/>
    <property type="match status" value="1"/>
</dbReference>
<dbReference type="PIRSF" id="PIRSF001492">
    <property type="entry name" value="IPGAM"/>
    <property type="match status" value="1"/>
</dbReference>
<dbReference type="SUPFAM" id="SSF64158">
    <property type="entry name" value="2,3-Bisphosphoglycerate-independent phosphoglycerate mutase, substrate-binding domain"/>
    <property type="match status" value="1"/>
</dbReference>
<dbReference type="SUPFAM" id="SSF53649">
    <property type="entry name" value="Alkaline phosphatase-like"/>
    <property type="match status" value="1"/>
</dbReference>
<evidence type="ECO:0000255" key="1">
    <source>
        <dbReference type="HAMAP-Rule" id="MF_01038"/>
    </source>
</evidence>
<name>GPMI_MYCPU</name>
<sequence length="505" mass="57195">MENKKNKKVILVVIDGLGLRKEKIGNAFELAKTPFFDKMFKEFPWSFIQASGKFVGLPEGQMGNSEVGHLNIGAGQIVYTGLSLINKDLEEKNFINNKAFLEVIEDVKKNNSTLHLMGLVSPGGVHSLEDHLFEIIDVAYQKGLKKVSVHVFGDGRDVAPRSIKSSFEKLEKITNKYNYDIASISGRFYSMDRDKIFERTEKAYEALLGNSNSKFDNWSEFLNKQYSQEISDEFFIPSINASKNVNFVKDGDSIIFFNFRPDRARQLTHLLIGSSLYDFKPKKPVKINKFCSMMKYEGIETLIAFEEMEIKNPIGKVAEKAGLKQLRLAETQKYAHVTYFMDGGVDIEYKNSKRIMVESQKVRSYADHPEMSAKGITDELIKNAKDFDLTILNYANPDMVGHTGVLTSTIKAVEILDYELSRLVDFAQKNNITVFITADHGNAEVTEDDKGNPQTKHTSNPVMLITSDKNLKLKDGKLANISPTILDYLDIEKHEDMNEESLIIK</sequence>
<comment type="function">
    <text evidence="1">Catalyzes the interconversion of 2-phosphoglycerate and 3-phosphoglycerate.</text>
</comment>
<comment type="catalytic activity">
    <reaction evidence="1">
        <text>(2R)-2-phosphoglycerate = (2R)-3-phosphoglycerate</text>
        <dbReference type="Rhea" id="RHEA:15901"/>
        <dbReference type="ChEBI" id="CHEBI:58272"/>
        <dbReference type="ChEBI" id="CHEBI:58289"/>
        <dbReference type="EC" id="5.4.2.12"/>
    </reaction>
</comment>
<comment type="cofactor">
    <cofactor evidence="1">
        <name>Mn(2+)</name>
        <dbReference type="ChEBI" id="CHEBI:29035"/>
    </cofactor>
    <text evidence="1">Binds 2 manganese ions per subunit.</text>
</comment>
<comment type="pathway">
    <text evidence="1">Carbohydrate degradation; glycolysis; pyruvate from D-glyceraldehyde 3-phosphate: step 3/5.</text>
</comment>
<comment type="subunit">
    <text evidence="1">Monomer.</text>
</comment>
<comment type="similarity">
    <text evidence="1">Belongs to the BPG-independent phosphoglycerate mutase family.</text>
</comment>
<gene>
    <name evidence="1" type="primary">gpmI</name>
    <name type="ordered locus">MYPU_4590</name>
</gene>
<keyword id="KW-0324">Glycolysis</keyword>
<keyword id="KW-0413">Isomerase</keyword>
<keyword id="KW-0464">Manganese</keyword>
<keyword id="KW-0479">Metal-binding</keyword>
<keyword id="KW-1185">Reference proteome</keyword>
<organism>
    <name type="scientific">Mycoplasmopsis pulmonis (strain UAB CTIP)</name>
    <name type="common">Mycoplasma pulmonis</name>
    <dbReference type="NCBI Taxonomy" id="272635"/>
    <lineage>
        <taxon>Bacteria</taxon>
        <taxon>Bacillati</taxon>
        <taxon>Mycoplasmatota</taxon>
        <taxon>Mycoplasmoidales</taxon>
        <taxon>Metamycoplasmataceae</taxon>
        <taxon>Mycoplasmopsis</taxon>
    </lineage>
</organism>